<dbReference type="EMBL" id="CP000075">
    <property type="protein sequence ID" value="AAY35572.1"/>
    <property type="status" value="ALT_INIT"/>
    <property type="molecule type" value="Genomic_DNA"/>
</dbReference>
<dbReference type="RefSeq" id="WP_003414375.1">
    <property type="nucleotide sequence ID" value="NC_007005.1"/>
</dbReference>
<dbReference type="RefSeq" id="YP_233610.2">
    <property type="nucleotide sequence ID" value="NC_007005.1"/>
</dbReference>
<dbReference type="SMR" id="Q4ZZ50"/>
<dbReference type="STRING" id="205918.Psyr_0502"/>
<dbReference type="KEGG" id="psb:Psyr_0502"/>
<dbReference type="PATRIC" id="fig|205918.7.peg.521"/>
<dbReference type="eggNOG" id="COG3263">
    <property type="taxonomic scope" value="Bacteria"/>
</dbReference>
<dbReference type="HOGENOM" id="CLU_005912_9_2_6"/>
<dbReference type="OrthoDB" id="9810759at2"/>
<dbReference type="Proteomes" id="UP000000426">
    <property type="component" value="Chromosome"/>
</dbReference>
<dbReference type="GO" id="GO:0005886">
    <property type="term" value="C:plasma membrane"/>
    <property type="evidence" value="ECO:0007669"/>
    <property type="project" value="UniProtKB-SubCell"/>
</dbReference>
<dbReference type="GO" id="GO:0050660">
    <property type="term" value="F:flavin adenine dinucleotide binding"/>
    <property type="evidence" value="ECO:0007669"/>
    <property type="project" value="InterPro"/>
</dbReference>
<dbReference type="GO" id="GO:0015386">
    <property type="term" value="F:potassium:proton antiporter activity"/>
    <property type="evidence" value="ECO:0007669"/>
    <property type="project" value="UniProtKB-UniRule"/>
</dbReference>
<dbReference type="GO" id="GO:0006884">
    <property type="term" value="P:cell volume homeostasis"/>
    <property type="evidence" value="ECO:0007669"/>
    <property type="project" value="InterPro"/>
</dbReference>
<dbReference type="Gene3D" id="1.20.1530.20">
    <property type="match status" value="1"/>
</dbReference>
<dbReference type="Gene3D" id="3.30.465.10">
    <property type="match status" value="1"/>
</dbReference>
<dbReference type="Gene3D" id="3.30.70.1450">
    <property type="entry name" value="Regulator of K+ conductance, C-terminal domain"/>
    <property type="match status" value="1"/>
</dbReference>
<dbReference type="HAMAP" id="MF_01075">
    <property type="entry name" value="NhaP2"/>
    <property type="match status" value="1"/>
</dbReference>
<dbReference type="InterPro" id="IPR006153">
    <property type="entry name" value="Cation/H_exchanger_TM"/>
</dbReference>
<dbReference type="InterPro" id="IPR036318">
    <property type="entry name" value="FAD-bd_PCMH-like_sf"/>
</dbReference>
<dbReference type="InterPro" id="IPR016169">
    <property type="entry name" value="FAD-bd_PCMH_sub2"/>
</dbReference>
<dbReference type="InterPro" id="IPR038770">
    <property type="entry name" value="Na+/solute_symporter_sf"/>
</dbReference>
<dbReference type="InterPro" id="IPR023729">
    <property type="entry name" value="NhaP2"/>
</dbReference>
<dbReference type="InterPro" id="IPR006037">
    <property type="entry name" value="RCK_C"/>
</dbReference>
<dbReference type="InterPro" id="IPR036721">
    <property type="entry name" value="RCK_C_sf"/>
</dbReference>
<dbReference type="InterPro" id="IPR005170">
    <property type="entry name" value="Transptr-assoc_dom"/>
</dbReference>
<dbReference type="NCBIfam" id="NF003714">
    <property type="entry name" value="PRK05326.1-1"/>
    <property type="match status" value="1"/>
</dbReference>
<dbReference type="NCBIfam" id="NF003715">
    <property type="entry name" value="PRK05326.1-2"/>
    <property type="match status" value="1"/>
</dbReference>
<dbReference type="NCBIfam" id="NF003716">
    <property type="entry name" value="PRK05326.1-3"/>
    <property type="match status" value="1"/>
</dbReference>
<dbReference type="PANTHER" id="PTHR32507:SF7">
    <property type="entry name" value="K(+)_H(+) ANTIPORTER NHAP2"/>
    <property type="match status" value="1"/>
</dbReference>
<dbReference type="PANTHER" id="PTHR32507">
    <property type="entry name" value="NA(+)/H(+) ANTIPORTER 1"/>
    <property type="match status" value="1"/>
</dbReference>
<dbReference type="Pfam" id="PF03471">
    <property type="entry name" value="CorC_HlyC"/>
    <property type="match status" value="1"/>
</dbReference>
<dbReference type="Pfam" id="PF00999">
    <property type="entry name" value="Na_H_Exchanger"/>
    <property type="match status" value="1"/>
</dbReference>
<dbReference type="Pfam" id="PF02080">
    <property type="entry name" value="TrkA_C"/>
    <property type="match status" value="1"/>
</dbReference>
<dbReference type="SMART" id="SM01091">
    <property type="entry name" value="CorC_HlyC"/>
    <property type="match status" value="1"/>
</dbReference>
<dbReference type="SUPFAM" id="SSF56176">
    <property type="entry name" value="FAD-binding/transporter-associated domain-like"/>
    <property type="match status" value="1"/>
</dbReference>
<dbReference type="SUPFAM" id="SSF116726">
    <property type="entry name" value="TrkA C-terminal domain-like"/>
    <property type="match status" value="1"/>
</dbReference>
<dbReference type="PROSITE" id="PS51202">
    <property type="entry name" value="RCK_C"/>
    <property type="match status" value="1"/>
</dbReference>
<proteinExistence type="inferred from homology"/>
<keyword id="KW-0050">Antiport</keyword>
<keyword id="KW-0997">Cell inner membrane</keyword>
<keyword id="KW-1003">Cell membrane</keyword>
<keyword id="KW-0406">Ion transport</keyword>
<keyword id="KW-0472">Membrane</keyword>
<keyword id="KW-0630">Potassium</keyword>
<keyword id="KW-0633">Potassium transport</keyword>
<keyword id="KW-0812">Transmembrane</keyword>
<keyword id="KW-1133">Transmembrane helix</keyword>
<keyword id="KW-0813">Transport</keyword>
<accession>Q4ZZ50</accession>
<protein>
    <recommendedName>
        <fullName evidence="1">K(+)/H(+) antiporter NhaP2</fullName>
    </recommendedName>
    <alternativeName>
        <fullName evidence="1">Potassium/proton antiporter NhaP2</fullName>
    </alternativeName>
</protein>
<feature type="chain" id="PRO_0000052394" description="K(+)/H(+) antiporter NhaP2">
    <location>
        <begin position="1"/>
        <end position="580"/>
    </location>
</feature>
<feature type="transmembrane region" description="Helical" evidence="1">
    <location>
        <begin position="6"/>
        <end position="26"/>
    </location>
</feature>
<feature type="transmembrane region" description="Helical" evidence="1">
    <location>
        <begin position="34"/>
        <end position="54"/>
    </location>
</feature>
<feature type="transmembrane region" description="Helical" evidence="1">
    <location>
        <begin position="57"/>
        <end position="77"/>
    </location>
</feature>
<feature type="transmembrane region" description="Helical" evidence="1">
    <location>
        <begin position="86"/>
        <end position="106"/>
    </location>
</feature>
<feature type="transmembrane region" description="Helical" evidence="1">
    <location>
        <begin position="108"/>
        <end position="128"/>
    </location>
</feature>
<feature type="transmembrane region" description="Helical" evidence="1">
    <location>
        <begin position="162"/>
        <end position="182"/>
    </location>
</feature>
<feature type="transmembrane region" description="Helical" evidence="1">
    <location>
        <begin position="189"/>
        <end position="209"/>
    </location>
</feature>
<feature type="transmembrane region" description="Helical" evidence="1">
    <location>
        <begin position="217"/>
        <end position="237"/>
    </location>
</feature>
<feature type="transmembrane region" description="Helical" evidence="1">
    <location>
        <begin position="240"/>
        <end position="260"/>
    </location>
</feature>
<feature type="transmembrane region" description="Helical" evidence="1">
    <location>
        <begin position="279"/>
        <end position="299"/>
    </location>
</feature>
<feature type="transmembrane region" description="Helical" evidence="1">
    <location>
        <begin position="302"/>
        <end position="322"/>
    </location>
</feature>
<feature type="transmembrane region" description="Helical" evidence="1">
    <location>
        <begin position="334"/>
        <end position="354"/>
    </location>
</feature>
<feature type="transmembrane region" description="Helical" evidence="1">
    <location>
        <begin position="366"/>
        <end position="386"/>
    </location>
</feature>
<feature type="domain" description="RCK C-terminal" evidence="1">
    <location>
        <begin position="402"/>
        <end position="484"/>
    </location>
</feature>
<comment type="function">
    <text evidence="1">K(+)/H(+) antiporter that extrudes potassium in exchange for external protons and maintains the internal concentration of potassium under toxic levels.</text>
</comment>
<comment type="catalytic activity">
    <reaction evidence="1">
        <text>K(+)(in) + H(+)(out) = K(+)(out) + H(+)(in)</text>
        <dbReference type="Rhea" id="RHEA:29467"/>
        <dbReference type="ChEBI" id="CHEBI:15378"/>
        <dbReference type="ChEBI" id="CHEBI:29103"/>
    </reaction>
    <physiologicalReaction direction="left-to-right" evidence="1">
        <dbReference type="Rhea" id="RHEA:29468"/>
    </physiologicalReaction>
</comment>
<comment type="subcellular location">
    <subcellularLocation>
        <location evidence="1">Cell inner membrane</location>
        <topology evidence="1">Multi-pass membrane protein</topology>
    </subcellularLocation>
</comment>
<comment type="similarity">
    <text evidence="1">Belongs to the monovalent cation:proton antiporter 1 (CPA1) transporter (TC 2.A.36) family. NhaP2 subfamily.</text>
</comment>
<comment type="sequence caution" evidence="2">
    <conflict type="erroneous initiation">
        <sequence resource="EMBL-CDS" id="AAY35572"/>
    </conflict>
</comment>
<name>NHAP2_PSEU2</name>
<gene>
    <name evidence="1" type="primary">nhaP2</name>
    <name type="synonym">cvrA</name>
    <name type="ordered locus">Psyr_0502</name>
</gene>
<sequence>MDATTINSLFLIGALLVAASILVSSLSSRLGIPILVIILAVGMVAGVDGGGIIFDNYATAYLVGNLALAVILLDGGLRTRVASFRVALWPALSLATVGVLITTVLTGMMAAWLFNLSVIQGLLIGAIVGSTDAAAVFSLLGGKGLNERVTASLEIESGSNDPMAVFLTVTLIGMLASGQTGLHWGLLGHLIQEFGIGSFIGLGGGWILLQLVNRINLAAGLYPILVIAGGLAIFALTNAIHGSGFLAVYLCGLVLGNRPIRSRHGILHMLDGMAWLAQIGMFLVLGLLVTPHDLLPIAIPALGLALWMILVARPLSVMVGLLPFKAFHDREKAFIAWVGLRGAVPIILAVFPLMAGLPNAQLYFNLAFFIVLVSLLLQGTSLPWMAKLLKVTVPPDPAPISRAALEVHVTSEWELFVYRLGAEKWCIGAALRELKMPEGTRIAALFRGQQLLHPSGSTTLEVGDLLCVIGHEHDLPALGKLFSQAPQRGLDLRFFGDFVLEGDARLGEVAALYGLKLDGIDPGMPLSQFIVQKNRGEPVVGDQVEWNGTIWTVAVMDGNKIQKVGVKFPEGTRPGPGLFL</sequence>
<organism>
    <name type="scientific">Pseudomonas syringae pv. syringae (strain B728a)</name>
    <dbReference type="NCBI Taxonomy" id="205918"/>
    <lineage>
        <taxon>Bacteria</taxon>
        <taxon>Pseudomonadati</taxon>
        <taxon>Pseudomonadota</taxon>
        <taxon>Gammaproteobacteria</taxon>
        <taxon>Pseudomonadales</taxon>
        <taxon>Pseudomonadaceae</taxon>
        <taxon>Pseudomonas</taxon>
        <taxon>Pseudomonas syringae</taxon>
    </lineage>
</organism>
<reference key="1">
    <citation type="journal article" date="2005" name="Proc. Natl. Acad. Sci. U.S.A.">
        <title>Comparison of the complete genome sequences of Pseudomonas syringae pv. syringae B728a and pv. tomato DC3000.</title>
        <authorList>
            <person name="Feil H."/>
            <person name="Feil W.S."/>
            <person name="Chain P."/>
            <person name="Larimer F."/>
            <person name="Dibartolo G."/>
            <person name="Copeland A."/>
            <person name="Lykidis A."/>
            <person name="Trong S."/>
            <person name="Nolan M."/>
            <person name="Goltsman E."/>
            <person name="Thiel J."/>
            <person name="Malfatti S."/>
            <person name="Loper J.E."/>
            <person name="Lapidus A."/>
            <person name="Detter J.C."/>
            <person name="Land M."/>
            <person name="Richardson P.M."/>
            <person name="Kyrpides N.C."/>
            <person name="Ivanova N."/>
            <person name="Lindow S.E."/>
        </authorList>
    </citation>
    <scope>NUCLEOTIDE SEQUENCE [LARGE SCALE GENOMIC DNA]</scope>
    <source>
        <strain>B728a</strain>
    </source>
</reference>
<evidence type="ECO:0000255" key="1">
    <source>
        <dbReference type="HAMAP-Rule" id="MF_01075"/>
    </source>
</evidence>
<evidence type="ECO:0000305" key="2"/>